<organism>
    <name type="scientific">Nematostella vectensis</name>
    <name type="common">Starlet sea anemone</name>
    <dbReference type="NCBI Taxonomy" id="45351"/>
    <lineage>
        <taxon>Eukaryota</taxon>
        <taxon>Metazoa</taxon>
        <taxon>Cnidaria</taxon>
        <taxon>Anthozoa</taxon>
        <taxon>Hexacorallia</taxon>
        <taxon>Actiniaria</taxon>
        <taxon>Edwardsiidae</taxon>
        <taxon>Nematostella</taxon>
    </lineage>
</organism>
<accession>A7RYM7</accession>
<proteinExistence type="inferred from homology"/>
<sequence>MRQLPGKAAKETRKMKRERKQQNKEGHNRVVTVAIPVCLAVFVMLIVYVYSATSKHRKWARR</sequence>
<comment type="subcellular location">
    <subcellularLocation>
        <location evidence="3">Membrane</location>
        <topology evidence="3">Single-pass membrane protein</topology>
    </subcellularLocation>
</comment>
<comment type="similarity">
    <text evidence="3">Belongs to the SMCO4 family.</text>
</comment>
<gene>
    <name type="ORF">v1g164247</name>
</gene>
<keyword id="KW-0175">Coiled coil</keyword>
<keyword id="KW-0472">Membrane</keyword>
<keyword id="KW-1185">Reference proteome</keyword>
<keyword id="KW-0812">Transmembrane</keyword>
<keyword id="KW-1133">Transmembrane helix</keyword>
<name>SMC4B_NEMVE</name>
<dbReference type="EMBL" id="DS469553">
    <property type="protein sequence ID" value="EDO43548.1"/>
    <property type="molecule type" value="Genomic_DNA"/>
</dbReference>
<dbReference type="RefSeq" id="XP_001635611.1">
    <property type="nucleotide sequence ID" value="XM_001635561.1"/>
</dbReference>
<dbReference type="SMR" id="A7RYM7"/>
<dbReference type="FunCoup" id="A7RYM7">
    <property type="interactions" value="45"/>
</dbReference>
<dbReference type="EnsemblMetazoa" id="EDO43548">
    <property type="protein sequence ID" value="EDO43548"/>
    <property type="gene ID" value="NEMVEDRAFT_v1g164247"/>
</dbReference>
<dbReference type="eggNOG" id="ENOG502S7F4">
    <property type="taxonomic scope" value="Eukaryota"/>
</dbReference>
<dbReference type="HOGENOM" id="CLU_209950_1_0_1"/>
<dbReference type="InParanoid" id="A7RYM7"/>
<dbReference type="OMA" id="RKETWKD"/>
<dbReference type="PhylomeDB" id="A7RYM7"/>
<dbReference type="Proteomes" id="UP000001593">
    <property type="component" value="Unassembled WGS sequence"/>
</dbReference>
<dbReference type="GO" id="GO:0016020">
    <property type="term" value="C:membrane"/>
    <property type="evidence" value="ECO:0007669"/>
    <property type="project" value="UniProtKB-SubCell"/>
</dbReference>
<dbReference type="InterPro" id="IPR027960">
    <property type="entry name" value="DUF4519"/>
</dbReference>
<dbReference type="PANTHER" id="PTHR34644">
    <property type="entry name" value="SINGLE-PASS MEMBRANE AND COILED-COIL DOMAIN-CONTAINING PROTEIN 4"/>
    <property type="match status" value="1"/>
</dbReference>
<dbReference type="PANTHER" id="PTHR34644:SF2">
    <property type="entry name" value="SINGLE-PASS MEMBRANE AND COILED-COIL DOMAIN-CONTAINING PROTEIN 4"/>
    <property type="match status" value="1"/>
</dbReference>
<dbReference type="Pfam" id="PF15012">
    <property type="entry name" value="DUF4519"/>
    <property type="match status" value="1"/>
</dbReference>
<protein>
    <recommendedName>
        <fullName>Single-pass membrane and coiled-coil domain-containing protein 4 homolog</fullName>
    </recommendedName>
</protein>
<evidence type="ECO:0000255" key="1"/>
<evidence type="ECO:0000256" key="2">
    <source>
        <dbReference type="SAM" id="MobiDB-lite"/>
    </source>
</evidence>
<evidence type="ECO:0000305" key="3"/>
<reference key="1">
    <citation type="journal article" date="2007" name="Science">
        <title>Sea anemone genome reveals ancestral eumetazoan gene repertoire and genomic organization.</title>
        <authorList>
            <person name="Putnam N.H."/>
            <person name="Srivastava M."/>
            <person name="Hellsten U."/>
            <person name="Dirks B."/>
            <person name="Chapman J."/>
            <person name="Salamov A."/>
            <person name="Terry A."/>
            <person name="Shapiro H."/>
            <person name="Lindquist E."/>
            <person name="Kapitonov V.V."/>
            <person name="Jurka J."/>
            <person name="Genikhovich G."/>
            <person name="Grigoriev I.V."/>
            <person name="Lucas S.M."/>
            <person name="Steele R.E."/>
            <person name="Finnerty J.R."/>
            <person name="Technau U."/>
            <person name="Martindale M.Q."/>
            <person name="Rokhsar D.S."/>
        </authorList>
    </citation>
    <scope>NUCLEOTIDE SEQUENCE [LARGE SCALE GENOMIC DNA]</scope>
    <source>
        <strain>CH2 X CH6</strain>
    </source>
</reference>
<feature type="chain" id="PRO_0000365715" description="Single-pass membrane and coiled-coil domain-containing protein 4 homolog">
    <location>
        <begin position="1"/>
        <end position="62"/>
    </location>
</feature>
<feature type="transmembrane region" description="Helical" evidence="1">
    <location>
        <begin position="30"/>
        <end position="50"/>
    </location>
</feature>
<feature type="region of interest" description="Disordered" evidence="2">
    <location>
        <begin position="1"/>
        <end position="27"/>
    </location>
</feature>
<feature type="coiled-coil region" evidence="1">
    <location>
        <begin position="9"/>
        <end position="31"/>
    </location>
</feature>